<protein>
    <recommendedName>
        <fullName evidence="1">Autonomous glycyl radical cofactor</fullName>
    </recommendedName>
</protein>
<keyword id="KW-0556">Organic radical</keyword>
<gene>
    <name evidence="1" type="primary">grcA</name>
    <name type="ordered locus">KPK_1219</name>
</gene>
<feature type="chain" id="PRO_1000133991" description="Autonomous glycyl radical cofactor">
    <location>
        <begin position="1"/>
        <end position="127"/>
    </location>
</feature>
<feature type="domain" description="Glycine radical" evidence="1">
    <location>
        <begin position="5"/>
        <end position="127"/>
    </location>
</feature>
<feature type="modified residue" description="Glycine radical" evidence="1">
    <location>
        <position position="102"/>
    </location>
</feature>
<sequence>MITGIQITKAANDDLLNSFWLLDSEKGEARCLCAKGGFAEDDVVAVSKLGEIEYREIPVDVKPEVRVEGGQHLNVNVLRRETLLDAVEHPEKYPQLTIRVSGYAVRFNSLTPEQQRDVIARTFTESL</sequence>
<dbReference type="EMBL" id="CP000964">
    <property type="protein sequence ID" value="ACI11394.1"/>
    <property type="molecule type" value="Genomic_DNA"/>
</dbReference>
<dbReference type="SMR" id="B5XNF9"/>
<dbReference type="KEGG" id="kpe:KPK_1219"/>
<dbReference type="HOGENOM" id="CLU_133780_0_0_6"/>
<dbReference type="Proteomes" id="UP000001734">
    <property type="component" value="Chromosome"/>
</dbReference>
<dbReference type="GO" id="GO:0005829">
    <property type="term" value="C:cytosol"/>
    <property type="evidence" value="ECO:0007669"/>
    <property type="project" value="TreeGrafter"/>
</dbReference>
<dbReference type="GO" id="GO:0008861">
    <property type="term" value="F:formate C-acetyltransferase activity"/>
    <property type="evidence" value="ECO:0007669"/>
    <property type="project" value="TreeGrafter"/>
</dbReference>
<dbReference type="FunFam" id="3.20.70.20:FF:000002">
    <property type="entry name" value="Autonomous glycyl radical cofactor"/>
    <property type="match status" value="1"/>
</dbReference>
<dbReference type="Gene3D" id="3.20.70.20">
    <property type="match status" value="1"/>
</dbReference>
<dbReference type="HAMAP" id="MF_00806">
    <property type="entry name" value="GrcA"/>
    <property type="match status" value="1"/>
</dbReference>
<dbReference type="InterPro" id="IPR050244">
    <property type="entry name" value="Auton_GlycylRad_Cofactor"/>
</dbReference>
<dbReference type="InterPro" id="IPR019777">
    <property type="entry name" value="Form_AcTrfase_GR_CS"/>
</dbReference>
<dbReference type="InterPro" id="IPR001150">
    <property type="entry name" value="Gly_radical"/>
</dbReference>
<dbReference type="InterPro" id="IPR011140">
    <property type="entry name" value="Glycyl_radical_cofactor_GrcA"/>
</dbReference>
<dbReference type="NCBIfam" id="TIGR04365">
    <property type="entry name" value="spare_glycyl"/>
    <property type="match status" value="1"/>
</dbReference>
<dbReference type="PANTHER" id="PTHR30191">
    <property type="entry name" value="FORMATE ACETYLTRANSFERASE"/>
    <property type="match status" value="1"/>
</dbReference>
<dbReference type="PANTHER" id="PTHR30191:SF0">
    <property type="entry name" value="FORMATE ACETYLTRANSFERASE 1"/>
    <property type="match status" value="1"/>
</dbReference>
<dbReference type="Pfam" id="PF01228">
    <property type="entry name" value="Gly_radical"/>
    <property type="match status" value="1"/>
</dbReference>
<dbReference type="PIRSF" id="PIRSF000378">
    <property type="entry name" value="Gly_radicl_yfiD"/>
    <property type="match status" value="1"/>
</dbReference>
<dbReference type="SUPFAM" id="SSF51998">
    <property type="entry name" value="PFL-like glycyl radical enzymes"/>
    <property type="match status" value="1"/>
</dbReference>
<dbReference type="PROSITE" id="PS00850">
    <property type="entry name" value="GLY_RADICAL_1"/>
    <property type="match status" value="1"/>
</dbReference>
<dbReference type="PROSITE" id="PS51149">
    <property type="entry name" value="GLY_RADICAL_2"/>
    <property type="match status" value="1"/>
</dbReference>
<comment type="function">
    <text evidence="1">Acts as a radical domain for damaged PFL and possibly other radical proteins.</text>
</comment>
<name>GRCA_KLEP3</name>
<organism>
    <name type="scientific">Klebsiella pneumoniae (strain 342)</name>
    <dbReference type="NCBI Taxonomy" id="507522"/>
    <lineage>
        <taxon>Bacteria</taxon>
        <taxon>Pseudomonadati</taxon>
        <taxon>Pseudomonadota</taxon>
        <taxon>Gammaproteobacteria</taxon>
        <taxon>Enterobacterales</taxon>
        <taxon>Enterobacteriaceae</taxon>
        <taxon>Klebsiella/Raoultella group</taxon>
        <taxon>Klebsiella</taxon>
        <taxon>Klebsiella pneumoniae complex</taxon>
    </lineage>
</organism>
<proteinExistence type="inferred from homology"/>
<accession>B5XNF9</accession>
<evidence type="ECO:0000255" key="1">
    <source>
        <dbReference type="HAMAP-Rule" id="MF_00806"/>
    </source>
</evidence>
<reference key="1">
    <citation type="journal article" date="2008" name="PLoS Genet.">
        <title>Complete genome sequence of the N2-fixing broad host range endophyte Klebsiella pneumoniae 342 and virulence predictions verified in mice.</title>
        <authorList>
            <person name="Fouts D.E."/>
            <person name="Tyler H.L."/>
            <person name="DeBoy R.T."/>
            <person name="Daugherty S."/>
            <person name="Ren Q."/>
            <person name="Badger J.H."/>
            <person name="Durkin A.S."/>
            <person name="Huot H."/>
            <person name="Shrivastava S."/>
            <person name="Kothari S."/>
            <person name="Dodson R.J."/>
            <person name="Mohamoud Y."/>
            <person name="Khouri H."/>
            <person name="Roesch L.F.W."/>
            <person name="Krogfelt K.A."/>
            <person name="Struve C."/>
            <person name="Triplett E.W."/>
            <person name="Methe B.A."/>
        </authorList>
    </citation>
    <scope>NUCLEOTIDE SEQUENCE [LARGE SCALE GENOMIC DNA]</scope>
    <source>
        <strain>342</strain>
    </source>
</reference>